<reference key="1">
    <citation type="journal article" date="2004" name="Science">
        <title>The genome of the diatom Thalassiosira pseudonana: ecology, evolution, and metabolism.</title>
        <authorList>
            <person name="Armbrust E.V."/>
            <person name="Berges J.A."/>
            <person name="Bowler C."/>
            <person name="Green B.R."/>
            <person name="Martinez D."/>
            <person name="Putnam N.H."/>
            <person name="Zhou S."/>
            <person name="Allen A.E."/>
            <person name="Apt K.E."/>
            <person name="Bechner M."/>
            <person name="Brzezinski M.A."/>
            <person name="Chaal B.K."/>
            <person name="Chiovitti A."/>
            <person name="Davis A.K."/>
            <person name="Demarest M.S."/>
            <person name="Detter J.C."/>
            <person name="Glavina T."/>
            <person name="Goodstein D."/>
            <person name="Hadi M.Z."/>
            <person name="Hellsten U."/>
            <person name="Hildebrand M."/>
            <person name="Jenkins B.D."/>
            <person name="Jurka J."/>
            <person name="Kapitonov V.V."/>
            <person name="Kroger N."/>
            <person name="Lau W.W."/>
            <person name="Lane T.W."/>
            <person name="Larimer F.W."/>
            <person name="Lippmeier J.C."/>
            <person name="Lucas S."/>
            <person name="Medina M."/>
            <person name="Montsant A."/>
            <person name="Obornik M."/>
            <person name="Parker M.S."/>
            <person name="Palenik B."/>
            <person name="Pazour G.J."/>
            <person name="Richardson P.M."/>
            <person name="Rynearson T.A."/>
            <person name="Saito M.A."/>
            <person name="Schwartz D.C."/>
            <person name="Thamatrakoln K."/>
            <person name="Valentin K."/>
            <person name="Vardi A."/>
            <person name="Wilkerson F.P."/>
            <person name="Rokhsar D.S."/>
        </authorList>
    </citation>
    <scope>NUCLEOTIDE SEQUENCE [LARGE SCALE GENOMIC DNA]</scope>
    <source>
        <strain>CCMP1335 / NEPCC58 / CCAP 1085/12</strain>
    </source>
</reference>
<reference key="2">
    <citation type="submission" date="2008-09" db="EMBL/GenBank/DDBJ databases">
        <authorList>
            <consortium name="Diatom Consortium"/>
            <person name="Grigoriev I."/>
            <person name="Grimwood J."/>
            <person name="Kuo A."/>
            <person name="Otillar R.P."/>
            <person name="Salamov A."/>
            <person name="Detter J.C."/>
            <person name="Schmutz J."/>
            <person name="Lindquist E."/>
            <person name="Shapiro H."/>
            <person name="Lucas S."/>
            <person name="Glavina del Rio T."/>
            <person name="Bruce D."/>
            <person name="Pitluck S."/>
            <person name="Rokhsar D."/>
            <person name="Armbrust V."/>
        </authorList>
    </citation>
    <scope>GENOME REANNOTATION</scope>
    <source>
        <strain>CCMP1335 / NEPCC58 / CCAP 1085/12</strain>
    </source>
</reference>
<name>NNRE_THAPS</name>
<keyword id="KW-0413">Isomerase</keyword>
<keyword id="KW-0479">Metal-binding</keyword>
<keyword id="KW-0520">NAD</keyword>
<keyword id="KW-0521">NADP</keyword>
<keyword id="KW-0547">Nucleotide-binding</keyword>
<keyword id="KW-0630">Potassium</keyword>
<keyword id="KW-1185">Reference proteome</keyword>
<gene>
    <name type="ORF">THAPSDRAFT_30178</name>
</gene>
<evidence type="ECO:0000255" key="1">
    <source>
        <dbReference type="HAMAP-Rule" id="MF_03159"/>
    </source>
</evidence>
<proteinExistence type="inferred from homology"/>
<accession>B8LCD8</accession>
<organism>
    <name type="scientific">Thalassiosira pseudonana</name>
    <name type="common">Marine diatom</name>
    <name type="synonym">Cyclotella nana</name>
    <dbReference type="NCBI Taxonomy" id="35128"/>
    <lineage>
        <taxon>Eukaryota</taxon>
        <taxon>Sar</taxon>
        <taxon>Stramenopiles</taxon>
        <taxon>Ochrophyta</taxon>
        <taxon>Bacillariophyta</taxon>
        <taxon>Coscinodiscophyceae</taxon>
        <taxon>Thalassiosirophycidae</taxon>
        <taxon>Thalassiosirales</taxon>
        <taxon>Thalassiosiraceae</taxon>
        <taxon>Thalassiosira</taxon>
    </lineage>
</organism>
<feature type="chain" id="PRO_0000416328" description="NAD(P)H-hydrate epimerase">
    <location>
        <begin position="1"/>
        <end position="250"/>
    </location>
</feature>
<feature type="domain" description="YjeF N-terminal" evidence="1">
    <location>
        <begin position="14"/>
        <end position="238"/>
    </location>
</feature>
<feature type="binding site" evidence="1">
    <location>
        <begin position="74"/>
        <end position="78"/>
    </location>
    <ligand>
        <name>(6S)-NADPHX</name>
        <dbReference type="ChEBI" id="CHEBI:64076"/>
    </ligand>
</feature>
<feature type="binding site" evidence="1">
    <location>
        <position position="75"/>
    </location>
    <ligand>
        <name>K(+)</name>
        <dbReference type="ChEBI" id="CHEBI:29103"/>
    </ligand>
</feature>
<feature type="binding site" evidence="1">
    <location>
        <position position="143"/>
    </location>
    <ligand>
        <name>K(+)</name>
        <dbReference type="ChEBI" id="CHEBI:29103"/>
    </ligand>
</feature>
<feature type="binding site" evidence="1">
    <location>
        <begin position="147"/>
        <end position="154"/>
    </location>
    <ligand>
        <name>(6S)-NADPHX</name>
        <dbReference type="ChEBI" id="CHEBI:64076"/>
    </ligand>
</feature>
<feature type="binding site" evidence="1">
    <location>
        <position position="159"/>
    </location>
    <ligand>
        <name>(6S)-NADPHX</name>
        <dbReference type="ChEBI" id="CHEBI:64076"/>
    </ligand>
</feature>
<feature type="binding site" evidence="1">
    <location>
        <position position="180"/>
    </location>
    <ligand>
        <name>(6S)-NADPHX</name>
        <dbReference type="ChEBI" id="CHEBI:64076"/>
    </ligand>
</feature>
<feature type="binding site" evidence="1">
    <location>
        <position position="183"/>
    </location>
    <ligand>
        <name>K(+)</name>
        <dbReference type="ChEBI" id="CHEBI:29103"/>
    </ligand>
</feature>
<comment type="function">
    <text evidence="1">Catalyzes the epimerization of the S- and R-forms of NAD(P)HX, a damaged form of NAD(P)H that is a result of enzymatic or heat-dependent hydration. This is a prerequisite for the S-specific NAD(P)H-hydrate dehydratase to allow the repair of both epimers of NAD(P)HX.</text>
</comment>
<comment type="catalytic activity">
    <reaction>
        <text>(6R)-NADHX = (6S)-NADHX</text>
        <dbReference type="Rhea" id="RHEA:32215"/>
        <dbReference type="ChEBI" id="CHEBI:64074"/>
        <dbReference type="ChEBI" id="CHEBI:64075"/>
        <dbReference type="EC" id="5.1.99.6"/>
    </reaction>
</comment>
<comment type="catalytic activity">
    <reaction>
        <text>(6R)-NADPHX = (6S)-NADPHX</text>
        <dbReference type="Rhea" id="RHEA:32227"/>
        <dbReference type="ChEBI" id="CHEBI:64076"/>
        <dbReference type="ChEBI" id="CHEBI:64077"/>
        <dbReference type="EC" id="5.1.99.6"/>
    </reaction>
</comment>
<comment type="cofactor">
    <cofactor evidence="1">
        <name>K(+)</name>
        <dbReference type="ChEBI" id="CHEBI:29103"/>
    </cofactor>
    <text evidence="1">Binds 1 potassium ion per subunit.</text>
</comment>
<comment type="similarity">
    <text evidence="1">Belongs to the NnrE/AIBP family.</text>
</comment>
<dbReference type="EC" id="5.1.99.6"/>
<dbReference type="EMBL" id="DS999417">
    <property type="protein sequence ID" value="EED86969.1"/>
    <property type="molecule type" value="Genomic_DNA"/>
</dbReference>
<dbReference type="RefSeq" id="XP_002296768.1">
    <property type="nucleotide sequence ID" value="XM_002296732.1"/>
</dbReference>
<dbReference type="SMR" id="B8LCD8"/>
<dbReference type="FunCoup" id="B8LCD8">
    <property type="interactions" value="18"/>
</dbReference>
<dbReference type="STRING" id="35128.B8LCD8"/>
<dbReference type="PaxDb" id="35128-Thaps30178"/>
<dbReference type="EnsemblProtists" id="EED86969">
    <property type="protein sequence ID" value="EED86969"/>
    <property type="gene ID" value="THAPSDRAFT_30178"/>
</dbReference>
<dbReference type="GeneID" id="7449970"/>
<dbReference type="KEGG" id="tps:THAPSDRAFT_30178"/>
<dbReference type="eggNOG" id="KOG2585">
    <property type="taxonomic scope" value="Eukaryota"/>
</dbReference>
<dbReference type="HOGENOM" id="CLU_024853_3_0_1"/>
<dbReference type="InParanoid" id="B8LCD8"/>
<dbReference type="OMA" id="RHLFHYG"/>
<dbReference type="Proteomes" id="UP000001449">
    <property type="component" value="Unassembled WGS sequence"/>
</dbReference>
<dbReference type="GO" id="GO:0005739">
    <property type="term" value="C:mitochondrion"/>
    <property type="evidence" value="ECO:0000318"/>
    <property type="project" value="GO_Central"/>
</dbReference>
<dbReference type="GO" id="GO:0046872">
    <property type="term" value="F:metal ion binding"/>
    <property type="evidence" value="ECO:0007669"/>
    <property type="project" value="UniProtKB-KW"/>
</dbReference>
<dbReference type="GO" id="GO:0052856">
    <property type="term" value="F:NAD(P)HX epimerase activity"/>
    <property type="evidence" value="ECO:0000318"/>
    <property type="project" value="GO_Central"/>
</dbReference>
<dbReference type="GO" id="GO:0000166">
    <property type="term" value="F:nucleotide binding"/>
    <property type="evidence" value="ECO:0007669"/>
    <property type="project" value="UniProtKB-KW"/>
</dbReference>
<dbReference type="FunFam" id="3.40.50.10260:FF:000005">
    <property type="entry name" value="NAD(P)H-hydrate epimerase"/>
    <property type="match status" value="1"/>
</dbReference>
<dbReference type="Gene3D" id="3.40.50.10260">
    <property type="entry name" value="YjeF N-terminal domain"/>
    <property type="match status" value="1"/>
</dbReference>
<dbReference type="HAMAP" id="MF_01966">
    <property type="entry name" value="NADHX_epimerase"/>
    <property type="match status" value="1"/>
</dbReference>
<dbReference type="InterPro" id="IPR004443">
    <property type="entry name" value="YjeF_N_dom"/>
</dbReference>
<dbReference type="InterPro" id="IPR036652">
    <property type="entry name" value="YjeF_N_dom_sf"/>
</dbReference>
<dbReference type="InterPro" id="IPR032976">
    <property type="entry name" value="YJEFN_prot_NAXE-like"/>
</dbReference>
<dbReference type="NCBIfam" id="TIGR00197">
    <property type="entry name" value="yjeF_nterm"/>
    <property type="match status" value="1"/>
</dbReference>
<dbReference type="PANTHER" id="PTHR13232">
    <property type="entry name" value="NAD(P)H-HYDRATE EPIMERASE"/>
    <property type="match status" value="1"/>
</dbReference>
<dbReference type="PANTHER" id="PTHR13232:SF10">
    <property type="entry name" value="NAD(P)H-HYDRATE EPIMERASE"/>
    <property type="match status" value="1"/>
</dbReference>
<dbReference type="Pfam" id="PF03853">
    <property type="entry name" value="YjeF_N"/>
    <property type="match status" value="1"/>
</dbReference>
<dbReference type="SUPFAM" id="SSF64153">
    <property type="entry name" value="YjeF N-terminal domain-like"/>
    <property type="match status" value="1"/>
</dbReference>
<dbReference type="PROSITE" id="PS51385">
    <property type="entry name" value="YJEF_N"/>
    <property type="match status" value="1"/>
</dbReference>
<sequence length="250" mass="26840">MSNIQTGYLNAQDAAALDVELMSTPGFSLEQLMELAGLSVAEAVYEVAFGGDGEKASNDGGRKKRVLLVCGPGNNGGDGLVAARHLAHFGLESTIVYPKQSSKQHFVNLVKQCEDMGIPILQEIPSTNDSSKVEETKYDVIVDAIFGFSFHGTAPREPYATAISQMVQLQKEQSVLLSVDVPSGWDVDGGDLTGTNFHPDVLISLTAPKLSAKKFEGRHFVGGRFLPPSIAEKYGIQKPPYPGVSQVMEL</sequence>
<protein>
    <recommendedName>
        <fullName evidence="1">NAD(P)H-hydrate epimerase</fullName>
        <ecNumber>5.1.99.6</ecNumber>
    </recommendedName>
    <alternativeName>
        <fullName evidence="1">NAD(P)HX epimerase</fullName>
    </alternativeName>
</protein>